<organism>
    <name type="scientific">Homo sapiens</name>
    <name type="common">Human</name>
    <dbReference type="NCBI Taxonomy" id="9606"/>
    <lineage>
        <taxon>Eukaryota</taxon>
        <taxon>Metazoa</taxon>
        <taxon>Chordata</taxon>
        <taxon>Craniata</taxon>
        <taxon>Vertebrata</taxon>
        <taxon>Euteleostomi</taxon>
        <taxon>Mammalia</taxon>
        <taxon>Eutheria</taxon>
        <taxon>Euarchontoglires</taxon>
        <taxon>Primates</taxon>
        <taxon>Haplorrhini</taxon>
        <taxon>Catarrhini</taxon>
        <taxon>Hominidae</taxon>
        <taxon>Homo</taxon>
    </lineage>
</organism>
<gene>
    <name type="primary">SCG5</name>
    <name type="synonym">SGNE1</name>
</gene>
<sequence length="212" mass="23730">MVSRMVSTMLSGLLFWLASGWTPAFAYSPRTPDRVSEADIQRLLHGVMEQLGIARPRVEYPAHQAMNLVGPQSIEGGAHEGLQHLGPFGNIPNIVAELTGDNIPKDFSEDQGYPDPPNPCPVGKTADDGCLENTPDTAEFSREFQLHQHLFDPEHDYPGLGKWNKKLLYEKMKGGERRKRRSVNPYLQGQRLDNVVAKKSVPHFSDEDKDPE</sequence>
<proteinExistence type="evidence at protein level"/>
<dbReference type="EMBL" id="Y00757">
    <property type="protein sequence ID" value="CAA68726.1"/>
    <property type="molecule type" value="mRNA"/>
</dbReference>
<dbReference type="EMBL" id="AJ290438">
    <property type="protein sequence ID" value="CAB90397.1"/>
    <property type="molecule type" value="Genomic_DNA"/>
</dbReference>
<dbReference type="EMBL" id="AJ290439">
    <property type="protein sequence ID" value="CAB90397.1"/>
    <property type="status" value="JOINED"/>
    <property type="molecule type" value="Genomic_DNA"/>
</dbReference>
<dbReference type="EMBL" id="AJ290440">
    <property type="protein sequence ID" value="CAB90397.1"/>
    <property type="status" value="JOINED"/>
    <property type="molecule type" value="Genomic_DNA"/>
</dbReference>
<dbReference type="EMBL" id="AJ290441">
    <property type="protein sequence ID" value="CAB90397.1"/>
    <property type="status" value="JOINED"/>
    <property type="molecule type" value="Genomic_DNA"/>
</dbReference>
<dbReference type="EMBL" id="AJ290442">
    <property type="protein sequence ID" value="CAB90397.1"/>
    <property type="status" value="JOINED"/>
    <property type="molecule type" value="Genomic_DNA"/>
</dbReference>
<dbReference type="EMBL" id="CR541824">
    <property type="protein sequence ID" value="CAG46623.1"/>
    <property type="molecule type" value="mRNA"/>
</dbReference>
<dbReference type="EMBL" id="CH471125">
    <property type="protein sequence ID" value="EAW92262.1"/>
    <property type="molecule type" value="Genomic_DNA"/>
</dbReference>
<dbReference type="EMBL" id="BC005349">
    <property type="protein sequence ID" value="AAH05349.1"/>
    <property type="molecule type" value="mRNA"/>
</dbReference>
<dbReference type="EMBL" id="BC093053">
    <property type="protein sequence ID" value="AAH93053.1"/>
    <property type="molecule type" value="mRNA"/>
</dbReference>
<dbReference type="CCDS" id="CCDS45207.1">
    <molecule id="P05408-1"/>
</dbReference>
<dbReference type="CCDS" id="CCDS45208.1">
    <molecule id="P05408-2"/>
</dbReference>
<dbReference type="PIR" id="S01008">
    <property type="entry name" value="PUHU"/>
</dbReference>
<dbReference type="RefSeq" id="NP_001138229.1">
    <molecule id="P05408-1"/>
    <property type="nucleotide sequence ID" value="NM_001144757.3"/>
</dbReference>
<dbReference type="RefSeq" id="NP_003011.1">
    <molecule id="P05408-2"/>
    <property type="nucleotide sequence ID" value="NM_003020.5"/>
</dbReference>
<dbReference type="SMR" id="P05408"/>
<dbReference type="BioGRID" id="112345">
    <property type="interactions" value="25"/>
</dbReference>
<dbReference type="FunCoup" id="P05408">
    <property type="interactions" value="284"/>
</dbReference>
<dbReference type="IntAct" id="P05408">
    <property type="interactions" value="19"/>
</dbReference>
<dbReference type="MINT" id="P05408"/>
<dbReference type="STRING" id="9606.ENSP00000300175"/>
<dbReference type="MEROPS" id="I21.001"/>
<dbReference type="iPTMnet" id="P05408"/>
<dbReference type="PhosphoSitePlus" id="P05408"/>
<dbReference type="BioMuta" id="SCG5"/>
<dbReference type="DMDM" id="23830842"/>
<dbReference type="jPOST" id="P05408"/>
<dbReference type="MassIVE" id="P05408"/>
<dbReference type="PaxDb" id="9606-ENSP00000300175"/>
<dbReference type="PeptideAtlas" id="P05408"/>
<dbReference type="ProteomicsDB" id="51834">
    <molecule id="P05408-1"/>
</dbReference>
<dbReference type="ProteomicsDB" id="51835">
    <molecule id="P05408-2"/>
</dbReference>
<dbReference type="Antibodypedia" id="2202">
    <property type="antibodies" value="150 antibodies from 25 providers"/>
</dbReference>
<dbReference type="DNASU" id="6447"/>
<dbReference type="Ensembl" id="ENST00000300175.9">
    <molecule id="P05408-1"/>
    <property type="protein sequence ID" value="ENSP00000300175.4"/>
    <property type="gene ID" value="ENSG00000166922.9"/>
</dbReference>
<dbReference type="Ensembl" id="ENST00000413748.6">
    <molecule id="P05408-2"/>
    <property type="protein sequence ID" value="ENSP00000388560.2"/>
    <property type="gene ID" value="ENSG00000166922.9"/>
</dbReference>
<dbReference type="Ensembl" id="ENST00000614359.1">
    <molecule id="P05408-1"/>
    <property type="protein sequence ID" value="ENSP00000482615.1"/>
    <property type="gene ID" value="ENSG00000277614.1"/>
</dbReference>
<dbReference type="Ensembl" id="ENST00000632219.1">
    <molecule id="P05408-1"/>
    <property type="protein sequence ID" value="ENSP00000488109.1"/>
    <property type="gene ID" value="ENSG00000281931.1"/>
</dbReference>
<dbReference type="Ensembl" id="ENST00000632674.1">
    <molecule id="P05408-2"/>
    <property type="protein sequence ID" value="ENSP00000488509.1"/>
    <property type="gene ID" value="ENSG00000281931.1"/>
</dbReference>
<dbReference type="GeneID" id="6447"/>
<dbReference type="KEGG" id="hsa:6447"/>
<dbReference type="MANE-Select" id="ENST00000300175.9">
    <property type="protein sequence ID" value="ENSP00000300175.4"/>
    <property type="RefSeq nucleotide sequence ID" value="NM_001144757.3"/>
    <property type="RefSeq protein sequence ID" value="NP_001138229.1"/>
</dbReference>
<dbReference type="UCSC" id="uc001zgz.3">
    <molecule id="P05408-1"/>
    <property type="organism name" value="human"/>
</dbReference>
<dbReference type="AGR" id="HGNC:10816"/>
<dbReference type="CTD" id="6447"/>
<dbReference type="DisGeNET" id="6447"/>
<dbReference type="GeneCards" id="SCG5"/>
<dbReference type="HGNC" id="HGNC:10816">
    <property type="gene designation" value="SCG5"/>
</dbReference>
<dbReference type="HPA" id="ENSG00000166922">
    <property type="expression patterns" value="Tissue enhanced (brain, choroid plexus, pituitary gland)"/>
</dbReference>
<dbReference type="MalaCards" id="SCG5"/>
<dbReference type="MIM" id="173120">
    <property type="type" value="gene"/>
</dbReference>
<dbReference type="neXtProt" id="NX_P05408"/>
<dbReference type="OpenTargets" id="ENSG00000166922"/>
<dbReference type="PharmGKB" id="PA35724"/>
<dbReference type="VEuPathDB" id="HostDB:ENSG00000166922"/>
<dbReference type="eggNOG" id="KOG4187">
    <property type="taxonomic scope" value="Eukaryota"/>
</dbReference>
<dbReference type="GeneTree" id="ENSGT00390000009816"/>
<dbReference type="InParanoid" id="P05408"/>
<dbReference type="OMA" id="LGKWNKN"/>
<dbReference type="OrthoDB" id="9922675at2759"/>
<dbReference type="PAN-GO" id="P05408">
    <property type="GO annotations" value="2 GO annotations based on evolutionary models"/>
</dbReference>
<dbReference type="PhylomeDB" id="P05408"/>
<dbReference type="TreeFam" id="TF314328"/>
<dbReference type="PathwayCommons" id="P05408"/>
<dbReference type="SignaLink" id="P05408"/>
<dbReference type="BioGRID-ORCS" id="6447">
    <property type="hits" value="67 hits in 1149 CRISPR screens"/>
</dbReference>
<dbReference type="ChiTaRS" id="SCG5">
    <property type="organism name" value="human"/>
</dbReference>
<dbReference type="GeneWiki" id="SCG5"/>
<dbReference type="GenomeRNAi" id="6447"/>
<dbReference type="Pharos" id="P05408">
    <property type="development level" value="Tbio"/>
</dbReference>
<dbReference type="PRO" id="PR:P05408"/>
<dbReference type="Proteomes" id="UP000005640">
    <property type="component" value="Chromosome 15"/>
</dbReference>
<dbReference type="RNAct" id="P05408">
    <property type="molecule type" value="protein"/>
</dbReference>
<dbReference type="Bgee" id="ENSG00000166922">
    <property type="expression patterns" value="Expressed in islet of Langerhans and 100 other cell types or tissues"/>
</dbReference>
<dbReference type="ExpressionAtlas" id="P05408">
    <property type="expression patterns" value="baseline and differential"/>
</dbReference>
<dbReference type="GO" id="GO:0005576">
    <property type="term" value="C:extracellular region"/>
    <property type="evidence" value="ECO:0007669"/>
    <property type="project" value="UniProtKB-SubCell"/>
</dbReference>
<dbReference type="GO" id="GO:0005634">
    <property type="term" value="C:nucleus"/>
    <property type="evidence" value="ECO:0007669"/>
    <property type="project" value="Ensembl"/>
</dbReference>
<dbReference type="GO" id="GO:0030141">
    <property type="term" value="C:secretory granule"/>
    <property type="evidence" value="ECO:0000250"/>
    <property type="project" value="UniProtKB"/>
</dbReference>
<dbReference type="GO" id="GO:0004857">
    <property type="term" value="F:enzyme inhibitor activity"/>
    <property type="evidence" value="ECO:0000250"/>
    <property type="project" value="UniProtKB"/>
</dbReference>
<dbReference type="GO" id="GO:0030234">
    <property type="term" value="F:enzyme regulator activity"/>
    <property type="evidence" value="ECO:0000318"/>
    <property type="project" value="GO_Central"/>
</dbReference>
<dbReference type="GO" id="GO:0005525">
    <property type="term" value="F:GTP binding"/>
    <property type="evidence" value="ECO:0000304"/>
    <property type="project" value="ProtInc"/>
</dbReference>
<dbReference type="GO" id="GO:0051082">
    <property type="term" value="F:unfolded protein binding"/>
    <property type="evidence" value="ECO:0000314"/>
    <property type="project" value="UniProtKB"/>
</dbReference>
<dbReference type="GO" id="GO:0006886">
    <property type="term" value="P:intracellular protein transport"/>
    <property type="evidence" value="ECO:0000250"/>
    <property type="project" value="UniProtKB"/>
</dbReference>
<dbReference type="GO" id="GO:0007218">
    <property type="term" value="P:neuropeptide signaling pathway"/>
    <property type="evidence" value="ECO:0007669"/>
    <property type="project" value="UniProtKB-KW"/>
</dbReference>
<dbReference type="GO" id="GO:0016486">
    <property type="term" value="P:peptide hormone processing"/>
    <property type="evidence" value="ECO:0000250"/>
    <property type="project" value="UniProtKB"/>
</dbReference>
<dbReference type="GO" id="GO:0046883">
    <property type="term" value="P:regulation of hormone secretion"/>
    <property type="evidence" value="ECO:0000250"/>
    <property type="project" value="UniProtKB"/>
</dbReference>
<dbReference type="InterPro" id="IPR007945">
    <property type="entry name" value="Secretogranin_V"/>
</dbReference>
<dbReference type="PANTHER" id="PTHR12738">
    <property type="entry name" value="NEUROENDOCRINE PROTEIN 7B2"/>
    <property type="match status" value="1"/>
</dbReference>
<dbReference type="PANTHER" id="PTHR12738:SF0">
    <property type="entry name" value="NEUROENDOCRINE PROTEIN 7B2"/>
    <property type="match status" value="1"/>
</dbReference>
<dbReference type="Pfam" id="PF05281">
    <property type="entry name" value="Secretogranin_V"/>
    <property type="match status" value="1"/>
</dbReference>
<accession>P05408</accession>
<accession>P01164</accession>
<accession>Q6FHD0</accession>
<accession>Q9BS38</accession>
<name>7B2_HUMAN</name>
<comment type="function">
    <text evidence="6">Acts as a molecular chaperone for PCSK2/PC2, preventing its premature activation in the regulated secretory pathway. Binds to inactive PCSK2 in the endoplasmic reticulum and facilitates its transport from there to later compartments of the secretory pathway where it is proteolytically matured and activated. Also required for cleavage of PCSK2 but does not appear to be involved in its folding. Plays a role in regulating pituitary hormone secretion. The C-terminal peptide inhibits PCSK2 in vitro.</text>
</comment>
<comment type="subunit">
    <text evidence="6">Interacts with PCSK2/PC2 early in the secretory pathway. Dissociation occurs at later stages.</text>
</comment>
<comment type="interaction">
    <interactant intactId="EBI-722635">
        <id>P05408</id>
    </interactant>
    <interactant intactId="EBI-16439278">
        <id>Q6FHY5</id>
        <label>MEOX2</label>
    </interactant>
    <organismsDiffer>false</organismsDiffer>
    <experiments>3</experiments>
</comment>
<comment type="interaction">
    <interactant intactId="EBI-722635">
        <id>P05408</id>
    </interactant>
    <interactant intactId="EBI-741480">
        <id>Q9UMX0</id>
        <label>UBQLN1</label>
    </interactant>
    <organismsDiffer>false</organismsDiffer>
    <experiments>3</experiments>
</comment>
<comment type="interaction">
    <interactant intactId="EBI-722635">
        <id>P05408</id>
    </interactant>
    <interactant intactId="EBI-10173939">
        <id>Q9UMX0-2</id>
        <label>UBQLN1</label>
    </interactant>
    <organismsDiffer>false</organismsDiffer>
    <experiments>3</experiments>
</comment>
<comment type="interaction">
    <interactant intactId="EBI-722635">
        <id>P05408</id>
    </interactant>
    <interactant intactId="EBI-947187">
        <id>Q9UHD9</id>
        <label>UBQLN2</label>
    </interactant>
    <organismsDiffer>false</organismsDiffer>
    <experiments>3</experiments>
</comment>
<comment type="subcellular location">
    <subcellularLocation>
        <location evidence="1">Secreted</location>
    </subcellularLocation>
    <text evidence="1">Neuroendocrine and endocrine secretory granules.</text>
</comment>
<comment type="alternative products">
    <event type="alternative splicing"/>
    <isoform>
        <id>P05408-1</id>
        <name>1</name>
        <sequence type="displayed"/>
    </isoform>
    <isoform>
        <id>P05408-2</id>
        <name>2</name>
        <sequence type="described" ref="VSP_011754"/>
    </isoform>
</comment>
<comment type="PTM">
    <text evidence="2">Proteolytically cleaved in the Golgi by a furin-like convertase to generate bioactive peptides.</text>
</comment>
<comment type="PTM">
    <text evidence="2">Sulfated on tyrosine residues.</text>
</comment>
<comment type="similarity">
    <text evidence="11">Belongs to the 7B2 family.</text>
</comment>
<evidence type="ECO:0000250" key="1">
    <source>
        <dbReference type="UniProtKB" id="P01165"/>
    </source>
</evidence>
<evidence type="ECO:0000250" key="2">
    <source>
        <dbReference type="UniProtKB" id="P12961"/>
    </source>
</evidence>
<evidence type="ECO:0000250" key="3">
    <source>
        <dbReference type="UniProtKB" id="P18844"/>
    </source>
</evidence>
<evidence type="ECO:0000256" key="4">
    <source>
        <dbReference type="SAM" id="MobiDB-lite"/>
    </source>
</evidence>
<evidence type="ECO:0000269" key="5">
    <source>
    </source>
</evidence>
<evidence type="ECO:0000269" key="6">
    <source>
    </source>
</evidence>
<evidence type="ECO:0000303" key="7">
    <source>
    </source>
</evidence>
<evidence type="ECO:0000303" key="8">
    <source>
    </source>
</evidence>
<evidence type="ECO:0000303" key="9">
    <source>
    </source>
</evidence>
<evidence type="ECO:0000303" key="10">
    <source ref="4"/>
</evidence>
<evidence type="ECO:0000305" key="11"/>
<feature type="signal peptide" evidence="5">
    <location>
        <begin position="1"/>
        <end position="26"/>
    </location>
</feature>
<feature type="chain" id="PRO_0000000041" description="Neuroendocrine protein 7B2">
    <location>
        <begin position="27"/>
        <end position="212"/>
    </location>
</feature>
<feature type="chain" id="PRO_0000000042" description="N-terminal peptide" evidence="1">
    <location>
        <begin position="27"/>
        <end position="176"/>
    </location>
</feature>
<feature type="peptide" id="PRO_0000000043" description="C-terminal peptide" evidence="3">
    <location>
        <begin position="200"/>
        <end position="212"/>
    </location>
</feature>
<feature type="region of interest" description="Disordered" evidence="4">
    <location>
        <begin position="174"/>
        <end position="212"/>
    </location>
</feature>
<feature type="modified residue" description="Phosphoserine" evidence="2">
    <location>
        <position position="141"/>
    </location>
</feature>
<feature type="modified residue" description="Phosphoserine" evidence="2">
    <location>
        <position position="205"/>
    </location>
</feature>
<feature type="disulfide bond" evidence="3">
    <location>
        <begin position="120"/>
        <end position="130"/>
    </location>
</feature>
<feature type="splice variant" id="VSP_011754" description="In isoform 2." evidence="7 8 9 10">
    <location>
        <position position="126"/>
    </location>
</feature>
<feature type="sequence conflict" description="In Ref. 6; AAH05349." evidence="11" ref="6">
    <original>F</original>
    <variation>S</variation>
    <location>
        <position position="151"/>
    </location>
</feature>
<protein>
    <recommendedName>
        <fullName>Neuroendocrine protein 7B2</fullName>
    </recommendedName>
    <alternativeName>
        <fullName>Pituitary polypeptide</fullName>
    </alternativeName>
    <alternativeName>
        <fullName>Secretogranin V</fullName>
    </alternativeName>
    <alternativeName>
        <fullName>Secretogranin-5</fullName>
    </alternativeName>
    <alternativeName>
        <fullName>Secretory granule endocrine protein I</fullName>
    </alternativeName>
    <component>
        <recommendedName>
            <fullName>N-terminal peptide</fullName>
        </recommendedName>
    </component>
    <component>
        <recommendedName>
            <fullName>C-terminal peptide</fullName>
        </recommendedName>
    </component>
</protein>
<keyword id="KW-0025">Alternative splicing</keyword>
<keyword id="KW-0143">Chaperone</keyword>
<keyword id="KW-0165">Cleavage on pair of basic residues</keyword>
<keyword id="KW-0903">Direct protein sequencing</keyword>
<keyword id="KW-1015">Disulfide bond</keyword>
<keyword id="KW-0527">Neuropeptide</keyword>
<keyword id="KW-0597">Phosphoprotein</keyword>
<keyword id="KW-1267">Proteomics identification</keyword>
<keyword id="KW-1185">Reference proteome</keyword>
<keyword id="KW-0964">Secreted</keyword>
<keyword id="KW-0732">Signal</keyword>
<keyword id="KW-0765">Sulfation</keyword>
<keyword id="KW-0813">Transport</keyword>
<reference key="1">
    <citation type="journal article" date="1988" name="FEBS Lett.">
        <title>Cloning and sequence analysis of human pituitary cDNA encoding the novel polypeptide 7B2.</title>
        <authorList>
            <person name="Martens G.J.M."/>
        </authorList>
    </citation>
    <scope>NUCLEOTIDE SEQUENCE [MRNA] (ISOFORM 2)</scope>
    <source>
        <tissue>Pituitary</tissue>
    </source>
</reference>
<reference key="2">
    <citation type="journal article" date="1991" name="Biochem. Biophys. Res. Commun.">
        <title>The production by alternate splicing of two mRNAs differing by one codon could be an intrinsic property of neuroendocrine protein 7B2 gene expression in man.</title>
        <authorList>
            <person name="Paquet L."/>
            <person name="Lazure C."/>
            <person name="Seidah N.G."/>
            <person name="Chretien M."/>
            <person name="Mbikay M."/>
        </authorList>
    </citation>
    <scope>NUCLEOTIDE SEQUENCE [MRNA] (ISOFORMS 1 AND 2)</scope>
    <scope>PROTEIN SEQUENCE OF 125-140 (ISOFORM 1)</scope>
    <scope>PROTEIN SEQUENCE OF 126-132 (ISOFORM 2)</scope>
    <source>
        <tissue>Pituitary</tissue>
    </source>
</reference>
<reference key="3">
    <citation type="submission" date="2000-05" db="EMBL/GenBank/DDBJ databases">
        <title>Human neuroendocrine protein 7B2 genomic organization.</title>
        <authorList>
            <person name="Jackson R.S."/>
        </authorList>
    </citation>
    <scope>NUCLEOTIDE SEQUENCE [GENOMIC DNA]</scope>
</reference>
<reference key="4">
    <citation type="submission" date="2004-06" db="EMBL/GenBank/DDBJ databases">
        <title>Cloning of human full open reading frames in Gateway(TM) system entry vector (pDONR201).</title>
        <authorList>
            <person name="Ebert L."/>
            <person name="Schick M."/>
            <person name="Neubert P."/>
            <person name="Schatten R."/>
            <person name="Henze S."/>
            <person name="Korn B."/>
        </authorList>
    </citation>
    <scope>NUCLEOTIDE SEQUENCE [LARGE SCALE MRNA] (ISOFORM 2)</scope>
</reference>
<reference key="5">
    <citation type="submission" date="2005-07" db="EMBL/GenBank/DDBJ databases">
        <authorList>
            <person name="Mural R.J."/>
            <person name="Istrail S."/>
            <person name="Sutton G."/>
            <person name="Florea L."/>
            <person name="Halpern A.L."/>
            <person name="Mobarry C.M."/>
            <person name="Lippert R."/>
            <person name="Walenz B."/>
            <person name="Shatkay H."/>
            <person name="Dew I."/>
            <person name="Miller J.R."/>
            <person name="Flanigan M.J."/>
            <person name="Edwards N.J."/>
            <person name="Bolanos R."/>
            <person name="Fasulo D."/>
            <person name="Halldorsson B.V."/>
            <person name="Hannenhalli S."/>
            <person name="Turner R."/>
            <person name="Yooseph S."/>
            <person name="Lu F."/>
            <person name="Nusskern D.R."/>
            <person name="Shue B.C."/>
            <person name="Zheng X.H."/>
            <person name="Zhong F."/>
            <person name="Delcher A.L."/>
            <person name="Huson D.H."/>
            <person name="Kravitz S.A."/>
            <person name="Mouchard L."/>
            <person name="Reinert K."/>
            <person name="Remington K.A."/>
            <person name="Clark A.G."/>
            <person name="Waterman M.S."/>
            <person name="Eichler E.E."/>
            <person name="Adams M.D."/>
            <person name="Hunkapiller M.W."/>
            <person name="Myers E.W."/>
            <person name="Venter J.C."/>
        </authorList>
    </citation>
    <scope>NUCLEOTIDE SEQUENCE [LARGE SCALE GENOMIC DNA]</scope>
</reference>
<reference key="6">
    <citation type="journal article" date="2004" name="Genome Res.">
        <title>The status, quality, and expansion of the NIH full-length cDNA project: the Mammalian Gene Collection (MGC).</title>
        <authorList>
            <consortium name="The MGC Project Team"/>
        </authorList>
    </citation>
    <scope>NUCLEOTIDE SEQUENCE [LARGE SCALE MRNA] (ISOFORMS 1 AND 2)</scope>
    <source>
        <tissue>Pancreas</tissue>
    </source>
</reference>
<reference key="7">
    <citation type="journal article" date="1996" name="Eur. J. Biochem.">
        <title>Structural organization of the gene encoding the neuroendocrine chaperone 7B2.</title>
        <authorList>
            <person name="Braks J.A."/>
            <person name="Broers C.A."/>
            <person name="Danger J.M."/>
            <person name="Martens G.J.M."/>
        </authorList>
    </citation>
    <scope>NUCLEOTIDE SEQUENCE [GENOMIC DNA] OF 61-92</scope>
</reference>
<reference key="8">
    <citation type="journal article" date="1983" name="Arch. Biochem. Biophys.">
        <title>Isolation and NH2-terminal sequence of a highly conserved human and porcine pituitary protein belonging to a new superfamily. Immunocytochemical localization in pars distalis and pars nervosa of the pituitary and in the supraoptic nucleus of the hypothalamus.</title>
        <authorList>
            <person name="Seidah N.G."/>
            <person name="Hsi K.L."/>
            <person name="de Serres G."/>
            <person name="Rochemont J."/>
            <person name="Hamelin J."/>
            <person name="Antakly T."/>
            <person name="Cantin M."/>
            <person name="Chretien M."/>
        </authorList>
    </citation>
    <scope>PROTEIN SEQUENCE OF 27-103</scope>
</reference>
<reference key="9">
    <citation type="journal article" date="1994" name="Cell">
        <title>7B2 is a neuroendocrine chaperone that transiently interacts with prohormone convertase PC2 in the secretory pathway.</title>
        <authorList>
            <person name="Braks J.A."/>
            <person name="Martens G.J.M."/>
        </authorList>
    </citation>
    <scope>FUNCTION</scope>
    <scope>INTERACTION WITH PCSK2</scope>
</reference>
<reference key="10">
    <citation type="journal article" date="2001" name="Biochem. J.">
        <title>Neuroendocrine secretory protein 7B2: structure, expression and functions.</title>
        <authorList>
            <person name="Mbikay M."/>
            <person name="Seidah N.G."/>
            <person name="Chretien M."/>
        </authorList>
    </citation>
    <scope>REVIEW</scope>
</reference>